<proteinExistence type="inferred from homology"/>
<gene>
    <name evidence="1" type="primary">rpoC</name>
    <name type="ordered locus">TRQ2_0476</name>
</gene>
<name>RPOC_THESQ</name>
<reference key="1">
    <citation type="journal article" date="2011" name="J. Bacteriol.">
        <title>Genome sequence of Thermotoga sp. strain RQ2, a hyperthermophilic bacterium isolated from a geothermally heated region of the seafloor near Ribeira Quente, the Azores.</title>
        <authorList>
            <person name="Swithers K.S."/>
            <person name="DiPippo J.L."/>
            <person name="Bruce D.C."/>
            <person name="Detter C."/>
            <person name="Tapia R."/>
            <person name="Han S."/>
            <person name="Saunders E."/>
            <person name="Goodwin L.A."/>
            <person name="Han J."/>
            <person name="Woyke T."/>
            <person name="Pitluck S."/>
            <person name="Pennacchio L."/>
            <person name="Nolan M."/>
            <person name="Mikhailova N."/>
            <person name="Lykidis A."/>
            <person name="Land M.L."/>
            <person name="Brettin T."/>
            <person name="Stetter K.O."/>
            <person name="Nelson K.E."/>
            <person name="Gogarten J.P."/>
            <person name="Noll K.M."/>
        </authorList>
    </citation>
    <scope>NUCLEOTIDE SEQUENCE [LARGE SCALE GENOMIC DNA]</scope>
    <source>
        <strain>RQ2</strain>
    </source>
</reference>
<sequence>MPMSSFKRKIKAIQIKIASPEVIRSWSGGEVKKPETINYRTFKPERDGLFCERIFGPVKDYECACGKYKGKKYEGTVCERCGVRVESREARRKRMGHIELAAPAVHIWYLESIPSVLGTLLNMSTSDLENIIYYGSRRVIERVFIVTDPKDTPFSQGDVIYETEYRIYRKKWDFDVEQAFVVKNPKSPVLSDIDGEVTLKTEKSITGREITWIIVKNITRATHTVLPGMILVVKDGQEVEKGQDLTKEMTIDPVYAPFDGHVEIDELSNTITLKPLTTSKDQPVVFTVPYGAKILVSNGQKVKKGDQITTSTSLPSVKSSISGTVRFGSNLNIRALEDGNFEVLSTGEVYVEQVIEERKYPVFEGALVYVNNGDQVKKGDHLADRFLFEEEYLSATEYKIFESHYPTMFDVEERTENDRPIVVITDIDPEVSKETGLKVGDIVTENEYEAYLQIYPEKIVADAGAQAIKKLLQNLDLEALQAEIEAELKKLPSSSSKAIKLRRRLKMVKDFLKSGNKPEWMVLEVVPVIPPDLRPMIQIEGGRFATTDLNELYRRLINRNNRLKKLLELGAPEIILRNEKRMLQEAVDALIHNGSDSEGKRSRRAVLKDRNGRPLKSLTDLLKGKKGRFRRNLLGKRVDYSGRAVIVVGPNLKIHQCGIPKKMAMELFKPFVLAKLLGEGSSSKTMRKVKKAIIEKEMPEAWEVLEEVIKGSVVLLNRAPTLHRMSIQAFEPKLVEGNAIQLHPVVCPPFNADFDGDQMAVHVPLSAAAQAEARFLMLSRYNIISPAHGKPISLPTQDIIIGSYYLTTVGKEFDSLKEEDVKWKFSSPEEAMLAYHLGFIKLHTPILIKVVINGEEKRIKTTLGRVIFNGILPEDLRDYNRIFDKKQINALVYETFKRHGIDRAADLLDDIKDIGFHYATVSGLTLSLKDLKIPPERDEILRKTWEKVRIIEENYEKGFLTEEQRKSEIIRLWMSVTEEITKLTSKTLAEDPFNPIYMMVNSGARGNIDQVKQLAGIRGLMIKAYDPRSREIKSKIFKGQAIHEALTFDYPVDKNLREGVDILQFFISTYGARKGQVDTAMNTSFAGYLTRRLVDVAQSVTVSEPDCGTHEGIRAMDLIKEGTVVEKMNEFLFGRVLARDVLDPETKEVLKNPETGKEYTRNTMLTDDDANFLASYKKMVDVVRYEEIDITELSLPNMYAEIAEPVGEYEEGTELTWDVVKAAKNEGKYRIKVKVYPVVGTVYAEEEPLYDKKGERQLLVYQEVINEIVAKMLEENGIEKVPVRPDIIVRSPLTCESEYGVCAACYGMDLSNHKIVNVGEAVGIVAAQSIGEPGTQLTMRTFHVGGVMGASDIVSGLTTVEKTFEPYAFLREEKSGGKKEIRKYYGSEAILCEVDGFVKDIATDESGRTVIYIEDYAGNIHAYKVPKRAKVRVEKGQKVLRGETLTSGAIVWWKLLELESEKGVMTAMNLLKIIKNAYVQQGVSIHDKHFEIIFKQMLSMATIVDPGDSDYLPDQLVPLVDIKRFNREILEGNAKVEENRKWVIGKTLAKRIIAETEEGELVELAQKGDEVTEELLKKIIEAGIKEIDVFEKDKVVTYQILPKEPIKYKRRLLSLKKAALNYPGWLSAAAFEETAWVLTAAAIEGKVDPLIGLKENVIVGQLIPAGTGLDVFAGIQVEETPRAAVEEELA</sequence>
<organism>
    <name type="scientific">Thermotoga sp. (strain RQ2)</name>
    <dbReference type="NCBI Taxonomy" id="126740"/>
    <lineage>
        <taxon>Bacteria</taxon>
        <taxon>Thermotogati</taxon>
        <taxon>Thermotogota</taxon>
        <taxon>Thermotogae</taxon>
        <taxon>Thermotogales</taxon>
        <taxon>Thermotogaceae</taxon>
        <taxon>Thermotoga</taxon>
    </lineage>
</organism>
<evidence type="ECO:0000255" key="1">
    <source>
        <dbReference type="HAMAP-Rule" id="MF_01322"/>
    </source>
</evidence>
<keyword id="KW-0240">DNA-directed RNA polymerase</keyword>
<keyword id="KW-0460">Magnesium</keyword>
<keyword id="KW-0479">Metal-binding</keyword>
<keyword id="KW-0548">Nucleotidyltransferase</keyword>
<keyword id="KW-0804">Transcription</keyword>
<keyword id="KW-0808">Transferase</keyword>
<keyword id="KW-0862">Zinc</keyword>
<accession>B1L934</accession>
<protein>
    <recommendedName>
        <fullName evidence="1">DNA-directed RNA polymerase subunit beta'</fullName>
        <shortName evidence="1">RNAP subunit beta'</shortName>
        <ecNumber evidence="1">2.7.7.6</ecNumber>
    </recommendedName>
    <alternativeName>
        <fullName evidence="1">RNA polymerase subunit beta'</fullName>
    </alternativeName>
    <alternativeName>
        <fullName evidence="1">Transcriptase subunit beta'</fullName>
    </alternativeName>
</protein>
<dbReference type="EC" id="2.7.7.6" evidence="1"/>
<dbReference type="EMBL" id="CP000969">
    <property type="protein sequence ID" value="ACB08832.1"/>
    <property type="molecule type" value="Genomic_DNA"/>
</dbReference>
<dbReference type="RefSeq" id="WP_012310569.1">
    <property type="nucleotide sequence ID" value="NC_010483.1"/>
</dbReference>
<dbReference type="SMR" id="B1L934"/>
<dbReference type="KEGG" id="trq:TRQ2_0476"/>
<dbReference type="HOGENOM" id="CLU_000524_3_1_0"/>
<dbReference type="Proteomes" id="UP000001687">
    <property type="component" value="Chromosome"/>
</dbReference>
<dbReference type="GO" id="GO:0000428">
    <property type="term" value="C:DNA-directed RNA polymerase complex"/>
    <property type="evidence" value="ECO:0007669"/>
    <property type="project" value="UniProtKB-KW"/>
</dbReference>
<dbReference type="GO" id="GO:0003677">
    <property type="term" value="F:DNA binding"/>
    <property type="evidence" value="ECO:0007669"/>
    <property type="project" value="UniProtKB-UniRule"/>
</dbReference>
<dbReference type="GO" id="GO:0003899">
    <property type="term" value="F:DNA-directed RNA polymerase activity"/>
    <property type="evidence" value="ECO:0007669"/>
    <property type="project" value="UniProtKB-UniRule"/>
</dbReference>
<dbReference type="GO" id="GO:0000287">
    <property type="term" value="F:magnesium ion binding"/>
    <property type="evidence" value="ECO:0007669"/>
    <property type="project" value="UniProtKB-UniRule"/>
</dbReference>
<dbReference type="GO" id="GO:0008270">
    <property type="term" value="F:zinc ion binding"/>
    <property type="evidence" value="ECO:0007669"/>
    <property type="project" value="UniProtKB-UniRule"/>
</dbReference>
<dbReference type="GO" id="GO:0006351">
    <property type="term" value="P:DNA-templated transcription"/>
    <property type="evidence" value="ECO:0007669"/>
    <property type="project" value="UniProtKB-UniRule"/>
</dbReference>
<dbReference type="CDD" id="cd02655">
    <property type="entry name" value="RNAP_beta'_C"/>
    <property type="match status" value="1"/>
</dbReference>
<dbReference type="CDD" id="cd01609">
    <property type="entry name" value="RNAP_beta'_N"/>
    <property type="match status" value="1"/>
</dbReference>
<dbReference type="Gene3D" id="1.10.132.30">
    <property type="match status" value="1"/>
</dbReference>
<dbReference type="Gene3D" id="1.10.150.390">
    <property type="match status" value="1"/>
</dbReference>
<dbReference type="Gene3D" id="1.10.1790.20">
    <property type="match status" value="1"/>
</dbReference>
<dbReference type="Gene3D" id="1.10.40.90">
    <property type="match status" value="1"/>
</dbReference>
<dbReference type="Gene3D" id="2.40.40.20">
    <property type="match status" value="1"/>
</dbReference>
<dbReference type="Gene3D" id="2.40.50.100">
    <property type="match status" value="4"/>
</dbReference>
<dbReference type="Gene3D" id="4.10.860.120">
    <property type="entry name" value="RNA polymerase II, clamp domain"/>
    <property type="match status" value="1"/>
</dbReference>
<dbReference type="Gene3D" id="1.10.274.100">
    <property type="entry name" value="RNA polymerase Rpb1, domain 3"/>
    <property type="match status" value="1"/>
</dbReference>
<dbReference type="HAMAP" id="MF_01322">
    <property type="entry name" value="RNApol_bact_RpoC"/>
    <property type="match status" value="1"/>
</dbReference>
<dbReference type="InterPro" id="IPR045867">
    <property type="entry name" value="DNA-dir_RpoC_beta_prime"/>
</dbReference>
<dbReference type="InterPro" id="IPR012754">
    <property type="entry name" value="DNA-dir_RpoC_beta_prime_bact"/>
</dbReference>
<dbReference type="InterPro" id="IPR000722">
    <property type="entry name" value="RNA_pol_asu"/>
</dbReference>
<dbReference type="InterPro" id="IPR006592">
    <property type="entry name" value="RNA_pol_N"/>
</dbReference>
<dbReference type="InterPro" id="IPR007080">
    <property type="entry name" value="RNA_pol_Rpb1_1"/>
</dbReference>
<dbReference type="InterPro" id="IPR007066">
    <property type="entry name" value="RNA_pol_Rpb1_3"/>
</dbReference>
<dbReference type="InterPro" id="IPR042102">
    <property type="entry name" value="RNA_pol_Rpb1_3_sf"/>
</dbReference>
<dbReference type="InterPro" id="IPR007083">
    <property type="entry name" value="RNA_pol_Rpb1_4"/>
</dbReference>
<dbReference type="InterPro" id="IPR007081">
    <property type="entry name" value="RNA_pol_Rpb1_5"/>
</dbReference>
<dbReference type="InterPro" id="IPR044893">
    <property type="entry name" value="RNA_pol_Rpb1_clamp_domain"/>
</dbReference>
<dbReference type="InterPro" id="IPR038120">
    <property type="entry name" value="Rpb1_funnel_sf"/>
</dbReference>
<dbReference type="PANTHER" id="PTHR19376">
    <property type="entry name" value="DNA-DIRECTED RNA POLYMERASE"/>
    <property type="match status" value="1"/>
</dbReference>
<dbReference type="PANTHER" id="PTHR19376:SF54">
    <property type="entry name" value="DNA-DIRECTED RNA POLYMERASE SUBUNIT BETA"/>
    <property type="match status" value="1"/>
</dbReference>
<dbReference type="Pfam" id="PF04997">
    <property type="entry name" value="RNA_pol_Rpb1_1"/>
    <property type="match status" value="2"/>
</dbReference>
<dbReference type="Pfam" id="PF00623">
    <property type="entry name" value="RNA_pol_Rpb1_2"/>
    <property type="match status" value="2"/>
</dbReference>
<dbReference type="Pfam" id="PF04983">
    <property type="entry name" value="RNA_pol_Rpb1_3"/>
    <property type="match status" value="1"/>
</dbReference>
<dbReference type="Pfam" id="PF05000">
    <property type="entry name" value="RNA_pol_Rpb1_4"/>
    <property type="match status" value="1"/>
</dbReference>
<dbReference type="Pfam" id="PF04998">
    <property type="entry name" value="RNA_pol_Rpb1_5"/>
    <property type="match status" value="1"/>
</dbReference>
<dbReference type="SMART" id="SM00663">
    <property type="entry name" value="RPOLA_N"/>
    <property type="match status" value="1"/>
</dbReference>
<dbReference type="SUPFAM" id="SSF64484">
    <property type="entry name" value="beta and beta-prime subunits of DNA dependent RNA-polymerase"/>
    <property type="match status" value="1"/>
</dbReference>
<comment type="function">
    <text evidence="1">DNA-dependent RNA polymerase catalyzes the transcription of DNA into RNA using the four ribonucleoside triphosphates as substrates.</text>
</comment>
<comment type="catalytic activity">
    <reaction evidence="1">
        <text>RNA(n) + a ribonucleoside 5'-triphosphate = RNA(n+1) + diphosphate</text>
        <dbReference type="Rhea" id="RHEA:21248"/>
        <dbReference type="Rhea" id="RHEA-COMP:14527"/>
        <dbReference type="Rhea" id="RHEA-COMP:17342"/>
        <dbReference type="ChEBI" id="CHEBI:33019"/>
        <dbReference type="ChEBI" id="CHEBI:61557"/>
        <dbReference type="ChEBI" id="CHEBI:140395"/>
        <dbReference type="EC" id="2.7.7.6"/>
    </reaction>
</comment>
<comment type="cofactor">
    <cofactor evidence="1">
        <name>Mg(2+)</name>
        <dbReference type="ChEBI" id="CHEBI:18420"/>
    </cofactor>
    <text evidence="1">Binds 1 Mg(2+) ion per subunit.</text>
</comment>
<comment type="cofactor">
    <cofactor evidence="1">
        <name>Zn(2+)</name>
        <dbReference type="ChEBI" id="CHEBI:29105"/>
    </cofactor>
    <text evidence="1">Binds 2 Zn(2+) ions per subunit.</text>
</comment>
<comment type="subunit">
    <text evidence="1">The RNAP catalytic core consists of 2 alpha, 1 beta, 1 beta' and 1 omega subunit. When a sigma factor is associated with the core the holoenzyme is formed, which can initiate transcription.</text>
</comment>
<comment type="similarity">
    <text evidence="1">Belongs to the RNA polymerase beta' chain family.</text>
</comment>
<feature type="chain" id="PRO_0000353451" description="DNA-directed RNA polymerase subunit beta'">
    <location>
        <begin position="1"/>
        <end position="1690"/>
    </location>
</feature>
<feature type="binding site" evidence="1">
    <location>
        <position position="63"/>
    </location>
    <ligand>
        <name>Zn(2+)</name>
        <dbReference type="ChEBI" id="CHEBI:29105"/>
        <label>1</label>
    </ligand>
</feature>
<feature type="binding site" evidence="1">
    <location>
        <position position="65"/>
    </location>
    <ligand>
        <name>Zn(2+)</name>
        <dbReference type="ChEBI" id="CHEBI:29105"/>
        <label>1</label>
    </ligand>
</feature>
<feature type="binding site" evidence="1">
    <location>
        <position position="78"/>
    </location>
    <ligand>
        <name>Zn(2+)</name>
        <dbReference type="ChEBI" id="CHEBI:29105"/>
        <label>1</label>
    </ligand>
</feature>
<feature type="binding site" evidence="1">
    <location>
        <position position="81"/>
    </location>
    <ligand>
        <name>Zn(2+)</name>
        <dbReference type="ChEBI" id="CHEBI:29105"/>
        <label>1</label>
    </ligand>
</feature>
<feature type="binding site" evidence="1">
    <location>
        <position position="753"/>
    </location>
    <ligand>
        <name>Mg(2+)</name>
        <dbReference type="ChEBI" id="CHEBI:18420"/>
    </ligand>
</feature>
<feature type="binding site" evidence="1">
    <location>
        <position position="755"/>
    </location>
    <ligand>
        <name>Mg(2+)</name>
        <dbReference type="ChEBI" id="CHEBI:18420"/>
    </ligand>
</feature>
<feature type="binding site" evidence="1">
    <location>
        <position position="757"/>
    </location>
    <ligand>
        <name>Mg(2+)</name>
        <dbReference type="ChEBI" id="CHEBI:18420"/>
    </ligand>
</feature>
<feature type="binding site" evidence="1">
    <location>
        <position position="1107"/>
    </location>
    <ligand>
        <name>Zn(2+)</name>
        <dbReference type="ChEBI" id="CHEBI:29105"/>
        <label>2</label>
    </ligand>
</feature>
<feature type="binding site" evidence="1">
    <location>
        <position position="1295"/>
    </location>
    <ligand>
        <name>Zn(2+)</name>
        <dbReference type="ChEBI" id="CHEBI:29105"/>
        <label>2</label>
    </ligand>
</feature>
<feature type="binding site" evidence="1">
    <location>
        <position position="1302"/>
    </location>
    <ligand>
        <name>Zn(2+)</name>
        <dbReference type="ChEBI" id="CHEBI:29105"/>
        <label>2</label>
    </ligand>
</feature>
<feature type="binding site" evidence="1">
    <location>
        <position position="1305"/>
    </location>
    <ligand>
        <name>Zn(2+)</name>
        <dbReference type="ChEBI" id="CHEBI:29105"/>
        <label>2</label>
    </ligand>
</feature>